<protein>
    <recommendedName>
        <fullName>Wall-associated receptor kinase 2</fullName>
        <ecNumber>2.7.11.-</ecNumber>
    </recommendedName>
</protein>
<organism>
    <name type="scientific">Arabidopsis thaliana</name>
    <name type="common">Mouse-ear cress</name>
    <dbReference type="NCBI Taxonomy" id="3702"/>
    <lineage>
        <taxon>Eukaryota</taxon>
        <taxon>Viridiplantae</taxon>
        <taxon>Streptophyta</taxon>
        <taxon>Embryophyta</taxon>
        <taxon>Tracheophyta</taxon>
        <taxon>Spermatophyta</taxon>
        <taxon>Magnoliopsida</taxon>
        <taxon>eudicotyledons</taxon>
        <taxon>Gunneridae</taxon>
        <taxon>Pentapetalae</taxon>
        <taxon>rosids</taxon>
        <taxon>malvids</taxon>
        <taxon>Brassicales</taxon>
        <taxon>Brassicaceae</taxon>
        <taxon>Camelineae</taxon>
        <taxon>Arabidopsis</taxon>
    </lineage>
</organism>
<gene>
    <name type="primary">WAK2</name>
    <name type="ordered locus">At1g21270</name>
    <name type="ORF">F16F4.5</name>
</gene>
<keyword id="KW-0067">ATP-binding</keyword>
<keyword id="KW-0106">Calcium</keyword>
<keyword id="KW-1015">Disulfide bond</keyword>
<keyword id="KW-0245">EGF-like domain</keyword>
<keyword id="KW-0325">Glycoprotein</keyword>
<keyword id="KW-0418">Kinase</keyword>
<keyword id="KW-0472">Membrane</keyword>
<keyword id="KW-0547">Nucleotide-binding</keyword>
<keyword id="KW-0597">Phosphoprotein</keyword>
<keyword id="KW-1185">Reference proteome</keyword>
<keyword id="KW-0677">Repeat</keyword>
<keyword id="KW-0723">Serine/threonine-protein kinase</keyword>
<keyword id="KW-0732">Signal</keyword>
<keyword id="KW-0808">Transferase</keyword>
<keyword id="KW-0812">Transmembrane</keyword>
<keyword id="KW-1133">Transmembrane helix</keyword>
<dbReference type="EC" id="2.7.11.-"/>
<dbReference type="EMBL" id="AJ012423">
    <property type="protein sequence ID" value="CAB42872.1"/>
    <property type="molecule type" value="mRNA"/>
</dbReference>
<dbReference type="EMBL" id="AF083722">
    <property type="protein sequence ID" value="AAN60280.1"/>
    <property type="molecule type" value="mRNA"/>
</dbReference>
<dbReference type="EMBL" id="AC036104">
    <property type="protein sequence ID" value="AAF81355.1"/>
    <property type="molecule type" value="Genomic_DNA"/>
</dbReference>
<dbReference type="EMBL" id="CP002684">
    <property type="protein sequence ID" value="AEE30080.1"/>
    <property type="molecule type" value="Genomic_DNA"/>
</dbReference>
<dbReference type="EMBL" id="AY062531">
    <property type="protein sequence ID" value="AAL32609.1"/>
    <property type="molecule type" value="mRNA"/>
</dbReference>
<dbReference type="EMBL" id="BT010335">
    <property type="protein sequence ID" value="AAQ56778.1"/>
    <property type="molecule type" value="mRNA"/>
</dbReference>
<dbReference type="PIR" id="T52588">
    <property type="entry name" value="T52588"/>
</dbReference>
<dbReference type="RefSeq" id="NP_173549.1">
    <property type="nucleotide sequence ID" value="NM_101979.4"/>
</dbReference>
<dbReference type="SMR" id="Q9LMP1"/>
<dbReference type="BioGRID" id="23962">
    <property type="interactions" value="6"/>
</dbReference>
<dbReference type="FunCoup" id="Q9LMP1">
    <property type="interactions" value="127"/>
</dbReference>
<dbReference type="IntAct" id="Q9LMP1">
    <property type="interactions" value="4"/>
</dbReference>
<dbReference type="STRING" id="3702.Q9LMP1"/>
<dbReference type="GlyCosmos" id="Q9LMP1">
    <property type="glycosylation" value="7 sites, No reported glycans"/>
</dbReference>
<dbReference type="GlyGen" id="Q9LMP1">
    <property type="glycosylation" value="7 sites"/>
</dbReference>
<dbReference type="PaxDb" id="3702-AT1G21270.1"/>
<dbReference type="ProteomicsDB" id="242763"/>
<dbReference type="EnsemblPlants" id="AT1G21270.1">
    <property type="protein sequence ID" value="AT1G21270.1"/>
    <property type="gene ID" value="AT1G21270"/>
</dbReference>
<dbReference type="GeneID" id="838723"/>
<dbReference type="Gramene" id="AT1G21270.1">
    <property type="protein sequence ID" value="AT1G21270.1"/>
    <property type="gene ID" value="AT1G21270"/>
</dbReference>
<dbReference type="KEGG" id="ath:AT1G21270"/>
<dbReference type="Araport" id="AT1G21270"/>
<dbReference type="TAIR" id="AT1G21270">
    <property type="gene designation" value="WAK2"/>
</dbReference>
<dbReference type="eggNOG" id="ENOG502QQPF">
    <property type="taxonomic scope" value="Eukaryota"/>
</dbReference>
<dbReference type="HOGENOM" id="CLU_000288_43_5_1"/>
<dbReference type="InParanoid" id="Q9LMP1"/>
<dbReference type="OMA" id="CSASSIC"/>
<dbReference type="PhylomeDB" id="Q9LMP1"/>
<dbReference type="PRO" id="PR:Q9LMP1"/>
<dbReference type="Proteomes" id="UP000006548">
    <property type="component" value="Chromosome 1"/>
</dbReference>
<dbReference type="ExpressionAtlas" id="Q9LMP1">
    <property type="expression patterns" value="baseline and differential"/>
</dbReference>
<dbReference type="GO" id="GO:0016020">
    <property type="term" value="C:membrane"/>
    <property type="evidence" value="ECO:0007669"/>
    <property type="project" value="UniProtKB-SubCell"/>
</dbReference>
<dbReference type="GO" id="GO:0005634">
    <property type="term" value="C:nucleus"/>
    <property type="evidence" value="ECO:0007005"/>
    <property type="project" value="TAIR"/>
</dbReference>
<dbReference type="GO" id="GO:0005524">
    <property type="term" value="F:ATP binding"/>
    <property type="evidence" value="ECO:0007669"/>
    <property type="project" value="UniProtKB-KW"/>
</dbReference>
<dbReference type="GO" id="GO:0005509">
    <property type="term" value="F:calcium ion binding"/>
    <property type="evidence" value="ECO:0007669"/>
    <property type="project" value="InterPro"/>
</dbReference>
<dbReference type="GO" id="GO:0030247">
    <property type="term" value="F:polysaccharide binding"/>
    <property type="evidence" value="ECO:0007669"/>
    <property type="project" value="InterPro"/>
</dbReference>
<dbReference type="GO" id="GO:0106310">
    <property type="term" value="F:protein serine kinase activity"/>
    <property type="evidence" value="ECO:0007669"/>
    <property type="project" value="RHEA"/>
</dbReference>
<dbReference type="GO" id="GO:0004674">
    <property type="term" value="F:protein serine/threonine kinase activity"/>
    <property type="evidence" value="ECO:0007669"/>
    <property type="project" value="UniProtKB-KW"/>
</dbReference>
<dbReference type="GO" id="GO:0007166">
    <property type="term" value="P:cell surface receptor signaling pathway"/>
    <property type="evidence" value="ECO:0007669"/>
    <property type="project" value="InterPro"/>
</dbReference>
<dbReference type="GO" id="GO:0009992">
    <property type="term" value="P:intracellular water homeostasis"/>
    <property type="evidence" value="ECO:0000314"/>
    <property type="project" value="TAIR"/>
</dbReference>
<dbReference type="GO" id="GO:0009311">
    <property type="term" value="P:oligosaccharide metabolic process"/>
    <property type="evidence" value="ECO:0000315"/>
    <property type="project" value="TAIR"/>
</dbReference>
<dbReference type="GO" id="GO:0009751">
    <property type="term" value="P:response to salicylic acid"/>
    <property type="evidence" value="ECO:0000314"/>
    <property type="project" value="TAIR"/>
</dbReference>
<dbReference type="GO" id="GO:0009826">
    <property type="term" value="P:unidimensional cell growth"/>
    <property type="evidence" value="ECO:0000315"/>
    <property type="project" value="TAIR"/>
</dbReference>
<dbReference type="CDD" id="cd00054">
    <property type="entry name" value="EGF_CA"/>
    <property type="match status" value="1"/>
</dbReference>
<dbReference type="CDD" id="cd14066">
    <property type="entry name" value="STKc_IRAK"/>
    <property type="match status" value="1"/>
</dbReference>
<dbReference type="FunFam" id="2.10.25.10:FF:000038">
    <property type="entry name" value="Fibrillin 2"/>
    <property type="match status" value="1"/>
</dbReference>
<dbReference type="FunFam" id="1.10.510.10:FF:000084">
    <property type="entry name" value="Wall-associated receptor kinase 2"/>
    <property type="match status" value="1"/>
</dbReference>
<dbReference type="FunFam" id="3.30.200.20:FF:000043">
    <property type="entry name" value="Wall-associated receptor kinase 2"/>
    <property type="match status" value="1"/>
</dbReference>
<dbReference type="Gene3D" id="2.10.25.10">
    <property type="entry name" value="Laminin"/>
    <property type="match status" value="2"/>
</dbReference>
<dbReference type="Gene3D" id="3.30.200.20">
    <property type="entry name" value="Phosphorylase Kinase, domain 1"/>
    <property type="match status" value="1"/>
</dbReference>
<dbReference type="Gene3D" id="1.10.510.10">
    <property type="entry name" value="Transferase(Phosphotransferase) domain 1"/>
    <property type="match status" value="1"/>
</dbReference>
<dbReference type="InterPro" id="IPR001881">
    <property type="entry name" value="EGF-like_Ca-bd_dom"/>
</dbReference>
<dbReference type="InterPro" id="IPR000742">
    <property type="entry name" value="EGF-like_dom"/>
</dbReference>
<dbReference type="InterPro" id="IPR000152">
    <property type="entry name" value="EGF-type_Asp/Asn_hydroxyl_site"/>
</dbReference>
<dbReference type="InterPro" id="IPR018097">
    <property type="entry name" value="EGF_Ca-bd_CS"/>
</dbReference>
<dbReference type="InterPro" id="IPR011009">
    <property type="entry name" value="Kinase-like_dom_sf"/>
</dbReference>
<dbReference type="InterPro" id="IPR049883">
    <property type="entry name" value="NOTCH1_EGF-like"/>
</dbReference>
<dbReference type="InterPro" id="IPR000719">
    <property type="entry name" value="Prot_kinase_dom"/>
</dbReference>
<dbReference type="InterPro" id="IPR001245">
    <property type="entry name" value="Ser-Thr/Tyr_kinase_cat_dom"/>
</dbReference>
<dbReference type="InterPro" id="IPR008271">
    <property type="entry name" value="Ser/Thr_kinase_AS"/>
</dbReference>
<dbReference type="InterPro" id="IPR045274">
    <property type="entry name" value="WAK-like"/>
</dbReference>
<dbReference type="InterPro" id="IPR025287">
    <property type="entry name" value="WAK_GUB"/>
</dbReference>
<dbReference type="PANTHER" id="PTHR27005:SF524">
    <property type="entry name" value="WALL-ASSOCIATED RECEPTOR KINASE 2-RELATED"/>
    <property type="match status" value="1"/>
</dbReference>
<dbReference type="PANTHER" id="PTHR27005">
    <property type="entry name" value="WALL-ASSOCIATED RECEPTOR KINASE-LIKE 21"/>
    <property type="match status" value="1"/>
</dbReference>
<dbReference type="Pfam" id="PF07645">
    <property type="entry name" value="EGF_CA"/>
    <property type="match status" value="1"/>
</dbReference>
<dbReference type="Pfam" id="PF13947">
    <property type="entry name" value="GUB_WAK_bind"/>
    <property type="match status" value="1"/>
</dbReference>
<dbReference type="Pfam" id="PF07714">
    <property type="entry name" value="PK_Tyr_Ser-Thr"/>
    <property type="match status" value="1"/>
</dbReference>
<dbReference type="SMART" id="SM00181">
    <property type="entry name" value="EGF"/>
    <property type="match status" value="2"/>
</dbReference>
<dbReference type="SMART" id="SM00179">
    <property type="entry name" value="EGF_CA"/>
    <property type="match status" value="1"/>
</dbReference>
<dbReference type="SMART" id="SM00220">
    <property type="entry name" value="S_TKc"/>
    <property type="match status" value="1"/>
</dbReference>
<dbReference type="SUPFAM" id="SSF57196">
    <property type="entry name" value="EGF/Laminin"/>
    <property type="match status" value="1"/>
</dbReference>
<dbReference type="SUPFAM" id="SSF56112">
    <property type="entry name" value="Protein kinase-like (PK-like)"/>
    <property type="match status" value="1"/>
</dbReference>
<dbReference type="PROSITE" id="PS00010">
    <property type="entry name" value="ASX_HYDROXYL"/>
    <property type="match status" value="1"/>
</dbReference>
<dbReference type="PROSITE" id="PS01186">
    <property type="entry name" value="EGF_2"/>
    <property type="match status" value="1"/>
</dbReference>
<dbReference type="PROSITE" id="PS50026">
    <property type="entry name" value="EGF_3"/>
    <property type="match status" value="2"/>
</dbReference>
<dbReference type="PROSITE" id="PS01187">
    <property type="entry name" value="EGF_CA"/>
    <property type="match status" value="1"/>
</dbReference>
<dbReference type="PROSITE" id="PS50011">
    <property type="entry name" value="PROTEIN_KINASE_DOM"/>
    <property type="match status" value="1"/>
</dbReference>
<dbReference type="PROSITE" id="PS00108">
    <property type="entry name" value="PROTEIN_KINASE_ST"/>
    <property type="match status" value="1"/>
</dbReference>
<comment type="function">
    <text evidence="7">Serine/threonine-protein kinase that may function as a signaling receptor of extracellular matrix component. Binding to pectin may have significance in the control of cell expansion, morphogenesis and development.</text>
</comment>
<comment type="catalytic activity">
    <reaction>
        <text>L-seryl-[protein] + ATP = O-phospho-L-seryl-[protein] + ADP + H(+)</text>
        <dbReference type="Rhea" id="RHEA:17989"/>
        <dbReference type="Rhea" id="RHEA-COMP:9863"/>
        <dbReference type="Rhea" id="RHEA-COMP:11604"/>
        <dbReference type="ChEBI" id="CHEBI:15378"/>
        <dbReference type="ChEBI" id="CHEBI:29999"/>
        <dbReference type="ChEBI" id="CHEBI:30616"/>
        <dbReference type="ChEBI" id="CHEBI:83421"/>
        <dbReference type="ChEBI" id="CHEBI:456216"/>
    </reaction>
</comment>
<comment type="catalytic activity">
    <reaction>
        <text>L-threonyl-[protein] + ATP = O-phospho-L-threonyl-[protein] + ADP + H(+)</text>
        <dbReference type="Rhea" id="RHEA:46608"/>
        <dbReference type="Rhea" id="RHEA-COMP:11060"/>
        <dbReference type="Rhea" id="RHEA-COMP:11605"/>
        <dbReference type="ChEBI" id="CHEBI:15378"/>
        <dbReference type="ChEBI" id="CHEBI:30013"/>
        <dbReference type="ChEBI" id="CHEBI:30616"/>
        <dbReference type="ChEBI" id="CHEBI:61977"/>
        <dbReference type="ChEBI" id="CHEBI:456216"/>
    </reaction>
</comment>
<comment type="subcellular location">
    <subcellularLocation>
        <location evidence="8">Membrane</location>
        <topology evidence="8">Single-pass type I membrane protein</topology>
    </subcellularLocation>
</comment>
<comment type="tissue specificity">
    <text evidence="6">Predominantly expressed in green tissues such as stems and leaves. Detected at organ junctions.</text>
</comment>
<comment type="developmental stage">
    <text evidence="7">Expressed in shoot and root apical meristems, and in expanding leaves and sepals.</text>
</comment>
<comment type="induction">
    <text evidence="6 7">Induced by INA and wounding.</text>
</comment>
<comment type="similarity">
    <text evidence="4">Belongs to the protein kinase superfamily. Ser/Thr protein kinase family.</text>
</comment>
<reference key="1">
    <citation type="journal article" date="1999" name="Plant Mol. Biol.">
        <title>A cluster of five cell wall-associated receptor kinase genes, Wak1-5, are expressed in specific organs of Arabidopsis.</title>
        <authorList>
            <person name="He Z.-H."/>
            <person name="Cheeseman I."/>
            <person name="He D."/>
            <person name="Kohorn B.D."/>
        </authorList>
    </citation>
    <scope>NUCLEOTIDE SEQUENCE [MRNA]</scope>
    <scope>TISSUE SPECIFICITY</scope>
    <scope>INDUCTION</scope>
    <source>
        <strain>cv. Columbia</strain>
    </source>
</reference>
<reference key="2">
    <citation type="submission" date="1998-08" db="EMBL/GenBank/DDBJ databases">
        <title>Signal peptide selection derived cDNAs from Arabidopsis thaliana leaves and guard cells.</title>
        <authorList>
            <person name="Stracke R."/>
            <person name="Palme K."/>
        </authorList>
    </citation>
    <scope>NUCLEOTIDE SEQUENCE [LARGE SCALE MRNA]</scope>
</reference>
<reference key="3">
    <citation type="journal article" date="2000" name="Nature">
        <title>Sequence and analysis of chromosome 1 of the plant Arabidopsis thaliana.</title>
        <authorList>
            <person name="Theologis A."/>
            <person name="Ecker J.R."/>
            <person name="Palm C.J."/>
            <person name="Federspiel N.A."/>
            <person name="Kaul S."/>
            <person name="White O."/>
            <person name="Alonso J."/>
            <person name="Altafi H."/>
            <person name="Araujo R."/>
            <person name="Bowman C.L."/>
            <person name="Brooks S.Y."/>
            <person name="Buehler E."/>
            <person name="Chan A."/>
            <person name="Chao Q."/>
            <person name="Chen H."/>
            <person name="Cheuk R.F."/>
            <person name="Chin C.W."/>
            <person name="Chung M.K."/>
            <person name="Conn L."/>
            <person name="Conway A.B."/>
            <person name="Conway A.R."/>
            <person name="Creasy T.H."/>
            <person name="Dewar K."/>
            <person name="Dunn P."/>
            <person name="Etgu P."/>
            <person name="Feldblyum T.V."/>
            <person name="Feng J.-D."/>
            <person name="Fong B."/>
            <person name="Fujii C.Y."/>
            <person name="Gill J.E."/>
            <person name="Goldsmith A.D."/>
            <person name="Haas B."/>
            <person name="Hansen N.F."/>
            <person name="Hughes B."/>
            <person name="Huizar L."/>
            <person name="Hunter J.L."/>
            <person name="Jenkins J."/>
            <person name="Johnson-Hopson C."/>
            <person name="Khan S."/>
            <person name="Khaykin E."/>
            <person name="Kim C.J."/>
            <person name="Koo H.L."/>
            <person name="Kremenetskaia I."/>
            <person name="Kurtz D.B."/>
            <person name="Kwan A."/>
            <person name="Lam B."/>
            <person name="Langin-Hooper S."/>
            <person name="Lee A."/>
            <person name="Lee J.M."/>
            <person name="Lenz C.A."/>
            <person name="Li J.H."/>
            <person name="Li Y.-P."/>
            <person name="Lin X."/>
            <person name="Liu S.X."/>
            <person name="Liu Z.A."/>
            <person name="Luros J.S."/>
            <person name="Maiti R."/>
            <person name="Marziali A."/>
            <person name="Militscher J."/>
            <person name="Miranda M."/>
            <person name="Nguyen M."/>
            <person name="Nierman W.C."/>
            <person name="Osborne B.I."/>
            <person name="Pai G."/>
            <person name="Peterson J."/>
            <person name="Pham P.K."/>
            <person name="Rizzo M."/>
            <person name="Rooney T."/>
            <person name="Rowley D."/>
            <person name="Sakano H."/>
            <person name="Salzberg S.L."/>
            <person name="Schwartz J.R."/>
            <person name="Shinn P."/>
            <person name="Southwick A.M."/>
            <person name="Sun H."/>
            <person name="Tallon L.J."/>
            <person name="Tambunga G."/>
            <person name="Toriumi M.J."/>
            <person name="Town C.D."/>
            <person name="Utterback T."/>
            <person name="Van Aken S."/>
            <person name="Vaysberg M."/>
            <person name="Vysotskaia V.S."/>
            <person name="Walker M."/>
            <person name="Wu D."/>
            <person name="Yu G."/>
            <person name="Fraser C.M."/>
            <person name="Venter J.C."/>
            <person name="Davis R.W."/>
        </authorList>
    </citation>
    <scope>NUCLEOTIDE SEQUENCE [LARGE SCALE GENOMIC DNA]</scope>
    <source>
        <strain>cv. Columbia</strain>
    </source>
</reference>
<reference key="4">
    <citation type="journal article" date="2017" name="Plant J.">
        <title>Araport11: a complete reannotation of the Arabidopsis thaliana reference genome.</title>
        <authorList>
            <person name="Cheng C.Y."/>
            <person name="Krishnakumar V."/>
            <person name="Chan A.P."/>
            <person name="Thibaud-Nissen F."/>
            <person name="Schobel S."/>
            <person name="Town C.D."/>
        </authorList>
    </citation>
    <scope>GENOME REANNOTATION</scope>
    <source>
        <strain>cv. Columbia</strain>
    </source>
</reference>
<reference key="5">
    <citation type="journal article" date="2003" name="Science">
        <title>Empirical analysis of transcriptional activity in the Arabidopsis genome.</title>
        <authorList>
            <person name="Yamada K."/>
            <person name="Lim J."/>
            <person name="Dale J.M."/>
            <person name="Chen H."/>
            <person name="Shinn P."/>
            <person name="Palm C.J."/>
            <person name="Southwick A.M."/>
            <person name="Wu H.C."/>
            <person name="Kim C.J."/>
            <person name="Nguyen M."/>
            <person name="Pham P.K."/>
            <person name="Cheuk R.F."/>
            <person name="Karlin-Newmann G."/>
            <person name="Liu S.X."/>
            <person name="Lam B."/>
            <person name="Sakano H."/>
            <person name="Wu T."/>
            <person name="Yu G."/>
            <person name="Miranda M."/>
            <person name="Quach H.L."/>
            <person name="Tripp M."/>
            <person name="Chang C.H."/>
            <person name="Lee J.M."/>
            <person name="Toriumi M.J."/>
            <person name="Chan M.M."/>
            <person name="Tang C.C."/>
            <person name="Onodera C.S."/>
            <person name="Deng J.M."/>
            <person name="Akiyama K."/>
            <person name="Ansari Y."/>
            <person name="Arakawa T."/>
            <person name="Banh J."/>
            <person name="Banno F."/>
            <person name="Bowser L."/>
            <person name="Brooks S.Y."/>
            <person name="Carninci P."/>
            <person name="Chao Q."/>
            <person name="Choy N."/>
            <person name="Enju A."/>
            <person name="Goldsmith A.D."/>
            <person name="Gurjal M."/>
            <person name="Hansen N.F."/>
            <person name="Hayashizaki Y."/>
            <person name="Johnson-Hopson C."/>
            <person name="Hsuan V.W."/>
            <person name="Iida K."/>
            <person name="Karnes M."/>
            <person name="Khan S."/>
            <person name="Koesema E."/>
            <person name="Ishida J."/>
            <person name="Jiang P.X."/>
            <person name="Jones T."/>
            <person name="Kawai J."/>
            <person name="Kamiya A."/>
            <person name="Meyers C."/>
            <person name="Nakajima M."/>
            <person name="Narusaka M."/>
            <person name="Seki M."/>
            <person name="Sakurai T."/>
            <person name="Satou M."/>
            <person name="Tamse R."/>
            <person name="Vaysberg M."/>
            <person name="Wallender E.K."/>
            <person name="Wong C."/>
            <person name="Yamamura Y."/>
            <person name="Yuan S."/>
            <person name="Shinozaki K."/>
            <person name="Davis R.W."/>
            <person name="Theologis A."/>
            <person name="Ecker J.R."/>
        </authorList>
    </citation>
    <scope>NUCLEOTIDE SEQUENCE [LARGE SCALE MRNA]</scope>
    <source>
        <strain>cv. Columbia</strain>
    </source>
</reference>
<reference key="6">
    <citation type="journal article" date="2001" name="Plant Cell">
        <title>Wall-associated kinases are expressed throughout plant development and are required for cell expansion.</title>
        <authorList>
            <person name="Wagner T.A."/>
            <person name="Kohorn B.D."/>
        </authorList>
    </citation>
    <scope>FUNCTION</scope>
    <scope>INDUCTION</scope>
    <scope>DEVELOPMENTAL STAGE</scope>
    <scope>INTERACTION WITH PECTIN</scope>
</reference>
<reference key="7">
    <citation type="journal article" date="2002" name="Plant Physiol.">
        <title>The cell wall-associated kinase (WAK) and WAK-like kinase gene family.</title>
        <authorList>
            <person name="Verica J.A."/>
            <person name="He Z.-H."/>
        </authorList>
    </citation>
    <scope>GENE FAMILY ORGANIZATION</scope>
</reference>
<feature type="signal peptide" evidence="2">
    <location>
        <begin position="1"/>
        <end position="23"/>
    </location>
</feature>
<feature type="chain" id="PRO_0000253301" description="Wall-associated receptor kinase 2">
    <location>
        <begin position="24"/>
        <end position="732"/>
    </location>
</feature>
<feature type="topological domain" description="Extracellular" evidence="2">
    <location>
        <begin position="24"/>
        <end position="329"/>
    </location>
</feature>
<feature type="transmembrane region" description="Helical" evidence="2">
    <location>
        <begin position="330"/>
        <end position="350"/>
    </location>
</feature>
<feature type="topological domain" description="Cytoplasmic" evidence="2">
    <location>
        <begin position="351"/>
        <end position="732"/>
    </location>
</feature>
<feature type="domain" description="EGF-like 1" evidence="3">
    <location>
        <begin position="230"/>
        <end position="277"/>
    </location>
</feature>
<feature type="domain" description="EGF-like 2; calcium-binding" evidence="3">
    <location>
        <begin position="278"/>
        <end position="319"/>
    </location>
</feature>
<feature type="domain" description="Protein kinase" evidence="4">
    <location>
        <begin position="404"/>
        <end position="677"/>
    </location>
</feature>
<feature type="active site" description="Proton acceptor" evidence="4 5">
    <location>
        <position position="529"/>
    </location>
</feature>
<feature type="binding site" evidence="4">
    <location>
        <begin position="410"/>
        <end position="418"/>
    </location>
    <ligand>
        <name>ATP</name>
        <dbReference type="ChEBI" id="CHEBI:30616"/>
    </ligand>
</feature>
<feature type="binding site" evidence="4">
    <location>
        <position position="432"/>
    </location>
    <ligand>
        <name>ATP</name>
        <dbReference type="ChEBI" id="CHEBI:30616"/>
    </ligand>
</feature>
<feature type="modified residue" description="Phosphothreonine" evidence="1">
    <location>
        <position position="393"/>
    </location>
</feature>
<feature type="modified residue" description="Phosphotyrosine" evidence="1">
    <location>
        <position position="477"/>
    </location>
</feature>
<feature type="modified residue" description="Phosphothreonine" evidence="1">
    <location>
        <position position="563"/>
    </location>
</feature>
<feature type="modified residue" description="Phosphothreonine" evidence="1">
    <location>
        <position position="568"/>
    </location>
</feature>
<feature type="modified residue" description="Phosphotyrosine" evidence="1">
    <location>
        <position position="576"/>
    </location>
</feature>
<feature type="glycosylation site" description="N-linked (GlcNAc...) asparagine" evidence="2">
    <location>
        <position position="57"/>
    </location>
</feature>
<feature type="glycosylation site" description="N-linked (GlcNAc...) asparagine" evidence="2">
    <location>
        <position position="75"/>
    </location>
</feature>
<feature type="glycosylation site" description="N-linked (GlcNAc...) asparagine" evidence="2">
    <location>
        <position position="111"/>
    </location>
</feature>
<feature type="glycosylation site" description="N-linked (GlcNAc...) asparagine" evidence="2">
    <location>
        <position position="154"/>
    </location>
</feature>
<feature type="glycosylation site" description="N-linked (GlcNAc...) asparagine" evidence="2">
    <location>
        <position position="217"/>
    </location>
</feature>
<feature type="glycosylation site" description="N-linked (GlcNAc...) asparagine" evidence="2">
    <location>
        <position position="246"/>
    </location>
</feature>
<feature type="glycosylation site" description="N-linked (GlcNAc...) asparagine" evidence="2">
    <location>
        <position position="288"/>
    </location>
</feature>
<feature type="disulfide bond" evidence="3">
    <location>
        <begin position="234"/>
        <end position="249"/>
    </location>
</feature>
<feature type="disulfide bond" evidence="3">
    <location>
        <begin position="243"/>
        <end position="260"/>
    </location>
</feature>
<feature type="disulfide bond" evidence="3">
    <location>
        <begin position="262"/>
        <end position="276"/>
    </location>
</feature>
<feature type="disulfide bond" evidence="3">
    <location>
        <begin position="282"/>
        <end position="295"/>
    </location>
</feature>
<feature type="disulfide bond" evidence="3">
    <location>
        <begin position="289"/>
        <end position="304"/>
    </location>
</feature>
<feature type="disulfide bond" evidence="3">
    <location>
        <begin position="306"/>
        <end position="318"/>
    </location>
</feature>
<feature type="sequence conflict" description="In Ref. 1 and 2." evidence="8" ref="1 2">
    <original>Q</original>
    <variation>R</variation>
    <location>
        <position position="105"/>
    </location>
</feature>
<feature type="sequence conflict" description="In Ref. 1 and 2." evidence="8" ref="1 2">
    <original>V</original>
    <variation>A</variation>
    <location>
        <position position="545"/>
    </location>
</feature>
<sequence>MKVQEGLFVVAVFYLAYTQLVKGQPRKECQTRCGNVAVEYPFGTSPGCYYPGDESFNLTCNEQEKLFFGNMPVINMSLSGQLRVRLVRSRVCYDSQGKQTDYIAQRTTLGNFTLSELNRFTVVGCNSYAFLRTSGVEKYSTGCISICDSATTKNGSCSGEGCCQIPVPRGYSFVRVKPHSFHNHPTVHLFNPCTYAFLVEDGMFDFHALEDLNNLRNVTTFPVVLDWSIGDKTCKQVEYRGVCGGNSTCFDSTGGTGYNCKCLEGFEGNPYLPNGCQDINECISSRHNCSEHSTCENTKGSFNCNCPSGYRKDSLNSCTRKVRPEYFRWTQIFLGTTIGFSVIMLGISCLQQKIKHRKNTELRQKFFEQNGGGMLIQRVSGAGPSNVDVKIFTEKGMKEATNGYHESRILGQGGQGTVYKGILPDNSIVAIKKARLGNRSQVEQFINEVLVLSQINHRNVVKVLGCCLETEVPLLVYEFINSGTLFDHLHGSLYDSSLTWEHRLRIATEVAGSLAYLHSSASIPIIHRDIKTANILLDKNLTAKVADFGASRLIPMDKEQLTTIVQGTLGYLDPEYYNTGLLNEKSDVYSFGVVLMELLSGQKALCFERPHCPKNLVSCFASATKNNRFHEIIDGQVMNEDNQREIQEAARIAAECTRLMGEERPRMKEVAAELEALRVKTTKYKWSDQYRETGEIEHLLGVQILSAQGETSSSIGYDSIRNVTTLDIEAGR</sequence>
<accession>Q9LMP1</accession>
<accession>Q9XGN2</accession>
<evidence type="ECO:0000250" key="1">
    <source>
        <dbReference type="UniProtKB" id="O48814"/>
    </source>
</evidence>
<evidence type="ECO:0000255" key="2"/>
<evidence type="ECO:0000255" key="3">
    <source>
        <dbReference type="PROSITE-ProRule" id="PRU00076"/>
    </source>
</evidence>
<evidence type="ECO:0000255" key="4">
    <source>
        <dbReference type="PROSITE-ProRule" id="PRU00159"/>
    </source>
</evidence>
<evidence type="ECO:0000255" key="5">
    <source>
        <dbReference type="PROSITE-ProRule" id="PRU10027"/>
    </source>
</evidence>
<evidence type="ECO:0000269" key="6">
    <source>
    </source>
</evidence>
<evidence type="ECO:0000269" key="7">
    <source>
    </source>
</evidence>
<evidence type="ECO:0000305" key="8"/>
<proteinExistence type="evidence at protein level"/>
<name>WAK2_ARATH</name>